<accession>P14660</accession>
<keyword id="KW-0106">Calcium</keyword>
<keyword id="KW-0148">Chlorophyll</keyword>
<keyword id="KW-0157">Chromophore</keyword>
<keyword id="KW-0249">Electron transport</keyword>
<keyword id="KW-0359">Herbicide resistance</keyword>
<keyword id="KW-0408">Iron</keyword>
<keyword id="KW-0460">Magnesium</keyword>
<keyword id="KW-0464">Manganese</keyword>
<keyword id="KW-0472">Membrane</keyword>
<keyword id="KW-0479">Metal-binding</keyword>
<keyword id="KW-0560">Oxidoreductase</keyword>
<keyword id="KW-0602">Photosynthesis</keyword>
<keyword id="KW-0604">Photosystem II</keyword>
<keyword id="KW-0793">Thylakoid</keyword>
<keyword id="KW-0812">Transmembrane</keyword>
<keyword id="KW-1133">Transmembrane helix</keyword>
<keyword id="KW-0813">Transport</keyword>
<gene>
    <name evidence="1" type="primary">psbA</name>
    <name type="synonym">psbA-I</name>
</gene>
<reference key="1">
    <citation type="journal article" date="1989" name="Plant Mol. Biol.">
        <title>Molecular analysis of psbA mutations responsible for various herbicide resistance phenotypes in Synechocystis 6714.</title>
        <authorList>
            <person name="Ajlani G."/>
            <person name="Kirilovsky D."/>
            <person name="Picaud M."/>
            <person name="Astier C."/>
        </authorList>
    </citation>
    <scope>NUCLEOTIDE SEQUENCE [GENOMIC DNA]</scope>
    <scope>MUTANTS</scope>
</reference>
<reference key="2">
    <citation type="journal article" date="1989" name="FEBS Lett.">
        <title>Mutation in phenol-type herbicide resistance maps within the psbA gene in Synechocystis 6714.</title>
        <authorList>
            <person name="Ajlani G."/>
            <person name="Meyer I."/>
            <person name="Vernotte C."/>
            <person name="Astier C."/>
        </authorList>
    </citation>
    <scope>MUTANT IOXI THR-266</scope>
</reference>
<reference key="3">
    <citation type="journal article" date="1990" name="Z. Naturforsch. C">
        <title>A new ioxynil-resistant mutant in Synechocystis PCC 6714: hypothesis on the interaction of ioxynil with the D 1 protein.</title>
        <authorList>
            <person name="Creuzet S."/>
            <person name="Ajlani G."/>
            <person name="Vernotte C."/>
            <person name="Astier C."/>
        </authorList>
    </citation>
    <scope>MUTANT IOXIIA ASP-266</scope>
</reference>
<name>PSBA_SYNY4</name>
<comment type="function">
    <text evidence="1">Photosystem II (PSII) is a light-driven water:plastoquinone oxidoreductase that uses light energy to abstract electrons from H(2)O, generating O(2) and a proton gradient subsequently used for ATP formation. It consists of a core antenna complex that captures photons, and an electron transfer chain that converts photonic excitation into a charge separation. The D1/D2 (PsbA/PsbD) reaction center heterodimer binds P680, the primary electron donor of PSII as well as several subsequent electron acceptors.</text>
</comment>
<comment type="catalytic activity">
    <reaction evidence="1">
        <text>2 a plastoquinone + 4 hnu + 2 H2O = 2 a plastoquinol + O2</text>
        <dbReference type="Rhea" id="RHEA:36359"/>
        <dbReference type="Rhea" id="RHEA-COMP:9561"/>
        <dbReference type="Rhea" id="RHEA-COMP:9562"/>
        <dbReference type="ChEBI" id="CHEBI:15377"/>
        <dbReference type="ChEBI" id="CHEBI:15379"/>
        <dbReference type="ChEBI" id="CHEBI:17757"/>
        <dbReference type="ChEBI" id="CHEBI:30212"/>
        <dbReference type="ChEBI" id="CHEBI:62192"/>
        <dbReference type="EC" id="1.10.3.9"/>
    </reaction>
</comment>
<comment type="cofactor">
    <text evidence="1">The D1/D2 heterodimer binds P680, chlorophylls that are the primary electron donor of PSII, and subsequent electron acceptors. It shares a non-heme iron and each subunit binds pheophytin, quinone, additional chlorophylls, carotenoids and lipids. D1 provides most of the ligands for the Mn4-Ca-O5 cluster of the oxygen-evolving complex (OEC). There is also a Cl(-1) ion associated with D1 and D2, which is required for oxygen evolution. The PSII complex binds additional chlorophylls, carotenoids and specific lipids.</text>
</comment>
<comment type="subunit">
    <text evidence="1">PSII is composed of 1 copy each of membrane proteins PsbA, PsbB, PsbC, PsbD, PsbE, PsbF, PsbH, PsbI, PsbJ, PsbK, PsbL, PsbM, PsbT, PsbX, PsbY, PsbZ, Psb30/Ycf12, peripheral proteins PsbO, CyanoQ (PsbQ), PsbU, PsbV and a large number of cofactors. It forms dimeric complexes.</text>
</comment>
<comment type="subcellular location">
    <subcellularLocation>
        <location evidence="1">Cellular thylakoid membrane</location>
        <topology evidence="1">Multi-pass membrane protein</topology>
    </subcellularLocation>
</comment>
<comment type="PTM">
    <text evidence="1">Tyr-161 forms a radical intermediate that is referred to as redox-active TyrZ, YZ or Y-Z.</text>
</comment>
<comment type="PTM">
    <text evidence="1">C-terminally processed by CtpA; processing is essential to allow assembly of the oxygen-evolving complex and thus photosynthetic growth.</text>
</comment>
<comment type="miscellaneous">
    <text evidence="1">Cyanobacteria usually contain more than 2 copies of the psbA gene.</text>
</comment>
<comment type="miscellaneous">
    <text evidence="1">2 of the reaction center chlorophylls (ChlD1 and ChlD2) are entirely coordinated by water.</text>
</comment>
<comment type="miscellaneous">
    <text evidence="1">Herbicides such as atrazine, BNT, diuron or ioxynil bind in the Q(B) binding site and block subsequent electron transfer.</text>
</comment>
<comment type="similarity">
    <text evidence="1">Belongs to the reaction center PufL/M/PsbA/D family.</text>
</comment>
<organism>
    <name type="scientific">Synechocystis sp. (strain PCC 6714)</name>
    <name type="common">Aphanocapsa sp. (strain PCC 6714)</name>
    <dbReference type="NCBI Taxonomy" id="1147"/>
    <lineage>
        <taxon>Bacteria</taxon>
        <taxon>Bacillati</taxon>
        <taxon>Cyanobacteriota</taxon>
        <taxon>Cyanophyceae</taxon>
        <taxon>Synechococcales</taxon>
        <taxon>Merismopediaceae</taxon>
        <taxon>Synechocystis</taxon>
    </lineage>
</organism>
<evidence type="ECO:0000255" key="1">
    <source>
        <dbReference type="HAMAP-Rule" id="MF_01379"/>
    </source>
</evidence>
<protein>
    <recommendedName>
        <fullName evidence="1">Photosystem II protein D1</fullName>
        <shortName evidence="1">PSII D1 protein</shortName>
        <ecNumber evidence="1">1.10.3.9</ecNumber>
    </recommendedName>
    <alternativeName>
        <fullName evidence="1">Photosystem II Q(B) protein</fullName>
    </alternativeName>
</protein>
<sequence>MTTTLQQRESASLWEQFCQWVTSTNNRIYVGWFGTLMIPTLLTATTCFIIAFIAAPPVDIDGIREPVAGSLLYGNNIISGAVVPSSNAIGLHFYPIWEAASLDEWLYNGGPYQLVVFQFLIGIFCYMGRQWELSYRLGMRPWICVAYSAPVSARTAVFLIYPIGQGSFSDGMPLGISGTFNFMIVFQAEHNILMHPFHMLGVAGVFGGSLFSAMHGSLVTSSLVRETTEVESQNYGYKFGQEEETYNIVAAHGYFGRLIFQYASFNNSRSLHFFLGAWPVIGIWFTAMGVSTMAFNLNGFNFNQSILDSQGRVIGTWADVLNRANIGFEVMHERNAHNFPLDLASGEQAPVALTAPAING</sequence>
<proteinExistence type="evidence at protein level"/>
<dbReference type="EC" id="1.10.3.9" evidence="1"/>
<dbReference type="EMBL" id="X15514">
    <property type="protein sequence ID" value="CAA33538.1"/>
    <property type="molecule type" value="Genomic_DNA"/>
</dbReference>
<dbReference type="PIR" id="S07461">
    <property type="entry name" value="F2YB17"/>
</dbReference>
<dbReference type="SMR" id="P14660"/>
<dbReference type="STRING" id="1147.D082_06970"/>
<dbReference type="eggNOG" id="ENOG502Z87P">
    <property type="taxonomic scope" value="Bacteria"/>
</dbReference>
<dbReference type="GO" id="GO:0009523">
    <property type="term" value="C:photosystem II"/>
    <property type="evidence" value="ECO:0007669"/>
    <property type="project" value="UniProtKB-KW"/>
</dbReference>
<dbReference type="GO" id="GO:0031676">
    <property type="term" value="C:plasma membrane-derived thylakoid membrane"/>
    <property type="evidence" value="ECO:0007669"/>
    <property type="project" value="UniProtKB-SubCell"/>
</dbReference>
<dbReference type="GO" id="GO:0016168">
    <property type="term" value="F:chlorophyll binding"/>
    <property type="evidence" value="ECO:0007669"/>
    <property type="project" value="UniProtKB-UniRule"/>
</dbReference>
<dbReference type="GO" id="GO:0045156">
    <property type="term" value="F:electron transporter, transferring electrons within the cyclic electron transport pathway of photosynthesis activity"/>
    <property type="evidence" value="ECO:0007669"/>
    <property type="project" value="InterPro"/>
</dbReference>
<dbReference type="GO" id="GO:0005506">
    <property type="term" value="F:iron ion binding"/>
    <property type="evidence" value="ECO:0007669"/>
    <property type="project" value="UniProtKB-UniRule"/>
</dbReference>
<dbReference type="GO" id="GO:0016682">
    <property type="term" value="F:oxidoreductase activity, acting on diphenols and related substances as donors, oxygen as acceptor"/>
    <property type="evidence" value="ECO:0007669"/>
    <property type="project" value="UniProtKB-UniRule"/>
</dbReference>
<dbReference type="GO" id="GO:0010242">
    <property type="term" value="F:oxygen evolving activity"/>
    <property type="evidence" value="ECO:0007669"/>
    <property type="project" value="UniProtKB-EC"/>
</dbReference>
<dbReference type="GO" id="GO:0009772">
    <property type="term" value="P:photosynthetic electron transport in photosystem II"/>
    <property type="evidence" value="ECO:0007669"/>
    <property type="project" value="InterPro"/>
</dbReference>
<dbReference type="GO" id="GO:0009635">
    <property type="term" value="P:response to herbicide"/>
    <property type="evidence" value="ECO:0007669"/>
    <property type="project" value="UniProtKB-KW"/>
</dbReference>
<dbReference type="CDD" id="cd09289">
    <property type="entry name" value="Photosystem-II_D1"/>
    <property type="match status" value="1"/>
</dbReference>
<dbReference type="FunFam" id="1.20.85.10:FF:000002">
    <property type="entry name" value="Photosystem II protein D1"/>
    <property type="match status" value="1"/>
</dbReference>
<dbReference type="Gene3D" id="1.20.85.10">
    <property type="entry name" value="Photosystem II protein D1-like"/>
    <property type="match status" value="2"/>
</dbReference>
<dbReference type="HAMAP" id="MF_01379">
    <property type="entry name" value="PSII_PsbA_D1"/>
    <property type="match status" value="1"/>
</dbReference>
<dbReference type="InterPro" id="IPR055266">
    <property type="entry name" value="D1/D2"/>
</dbReference>
<dbReference type="InterPro" id="IPR036854">
    <property type="entry name" value="Photo_II_D1/D2_sf"/>
</dbReference>
<dbReference type="InterPro" id="IPR000484">
    <property type="entry name" value="Photo_RC_L/M"/>
</dbReference>
<dbReference type="InterPro" id="IPR055265">
    <property type="entry name" value="Photo_RC_L/M_CS"/>
</dbReference>
<dbReference type="InterPro" id="IPR005867">
    <property type="entry name" value="PSII_D1"/>
</dbReference>
<dbReference type="NCBIfam" id="TIGR01151">
    <property type="entry name" value="psbA"/>
    <property type="match status" value="1"/>
</dbReference>
<dbReference type="PANTHER" id="PTHR33149:SF12">
    <property type="entry name" value="PHOTOSYSTEM II D2 PROTEIN"/>
    <property type="match status" value="1"/>
</dbReference>
<dbReference type="PANTHER" id="PTHR33149">
    <property type="entry name" value="PHOTOSYSTEM II PROTEIN D1"/>
    <property type="match status" value="1"/>
</dbReference>
<dbReference type="Pfam" id="PF00124">
    <property type="entry name" value="Photo_RC"/>
    <property type="match status" value="1"/>
</dbReference>
<dbReference type="PRINTS" id="PR00256">
    <property type="entry name" value="REACTNCENTRE"/>
</dbReference>
<dbReference type="SUPFAM" id="SSF81483">
    <property type="entry name" value="Bacterial photosystem II reaction centre, L and M subunits"/>
    <property type="match status" value="1"/>
</dbReference>
<dbReference type="PROSITE" id="PS00244">
    <property type="entry name" value="REACTION_CENTER"/>
    <property type="match status" value="1"/>
</dbReference>
<feature type="chain" id="PRO_0000090494" description="Photosystem II protein D1" evidence="1">
    <location>
        <begin position="1"/>
        <end position="344"/>
    </location>
</feature>
<feature type="propeptide" id="PRO_0000316427" evidence="1">
    <location>
        <begin position="345"/>
        <end position="360"/>
    </location>
</feature>
<feature type="transmembrane region" description="Helical" evidence="1">
    <location>
        <begin position="29"/>
        <end position="46"/>
    </location>
</feature>
<feature type="transmembrane region" description="Helical" evidence="1">
    <location>
        <begin position="118"/>
        <end position="133"/>
    </location>
</feature>
<feature type="transmembrane region" description="Helical" evidence="1">
    <location>
        <begin position="142"/>
        <end position="156"/>
    </location>
</feature>
<feature type="transmembrane region" description="Helical" evidence="1">
    <location>
        <begin position="197"/>
        <end position="218"/>
    </location>
</feature>
<feature type="transmembrane region" description="Helical" evidence="1">
    <location>
        <begin position="274"/>
        <end position="288"/>
    </location>
</feature>
<feature type="binding site" evidence="1">
    <location>
        <position position="126"/>
    </location>
    <ligand>
        <name>pheophytin a</name>
        <dbReference type="ChEBI" id="CHEBI:136840"/>
        <label>D1</label>
    </ligand>
</feature>
<feature type="binding site" evidence="1">
    <location>
        <position position="170"/>
    </location>
    <ligand>
        <name>[CaMn4O5] cluster</name>
        <dbReference type="ChEBI" id="CHEBI:189552"/>
    </ligand>
</feature>
<feature type="binding site" evidence="1">
    <location>
        <position position="189"/>
    </location>
    <ligand>
        <name>[CaMn4O5] cluster</name>
        <dbReference type="ChEBI" id="CHEBI:189552"/>
    </ligand>
</feature>
<feature type="binding site" description="axial binding residue" evidence="1">
    <location>
        <position position="198"/>
    </location>
    <ligand>
        <name>chlorophyll a</name>
        <dbReference type="ChEBI" id="CHEBI:58416"/>
        <label>PD1</label>
    </ligand>
    <ligandPart>
        <name>Mg</name>
        <dbReference type="ChEBI" id="CHEBI:25107"/>
    </ligandPart>
</feature>
<feature type="binding site" evidence="1">
    <location>
        <position position="215"/>
    </location>
    <ligand>
        <name>a quinone</name>
        <dbReference type="ChEBI" id="CHEBI:132124"/>
        <label>B</label>
    </ligand>
</feature>
<feature type="binding site" evidence="1">
    <location>
        <position position="215"/>
    </location>
    <ligand>
        <name>Fe cation</name>
        <dbReference type="ChEBI" id="CHEBI:24875"/>
        <note>ligand shared with heterodimeric partner</note>
    </ligand>
</feature>
<feature type="binding site" evidence="1">
    <location>
        <begin position="264"/>
        <end position="265"/>
    </location>
    <ligand>
        <name>a quinone</name>
        <dbReference type="ChEBI" id="CHEBI:132124"/>
        <label>B</label>
    </ligand>
</feature>
<feature type="binding site" evidence="1">
    <location>
        <position position="272"/>
    </location>
    <ligand>
        <name>Fe cation</name>
        <dbReference type="ChEBI" id="CHEBI:24875"/>
        <note>ligand shared with heterodimeric partner</note>
    </ligand>
</feature>
<feature type="binding site" evidence="1">
    <location>
        <position position="332"/>
    </location>
    <ligand>
        <name>[CaMn4O5] cluster</name>
        <dbReference type="ChEBI" id="CHEBI:189552"/>
    </ligand>
</feature>
<feature type="binding site" evidence="1">
    <location>
        <position position="333"/>
    </location>
    <ligand>
        <name>[CaMn4O5] cluster</name>
        <dbReference type="ChEBI" id="CHEBI:189552"/>
    </ligand>
</feature>
<feature type="binding site" evidence="1">
    <location>
        <position position="342"/>
    </location>
    <ligand>
        <name>[CaMn4O5] cluster</name>
        <dbReference type="ChEBI" id="CHEBI:189552"/>
    </ligand>
</feature>
<feature type="binding site" evidence="1">
    <location>
        <position position="344"/>
    </location>
    <ligand>
        <name>[CaMn4O5] cluster</name>
        <dbReference type="ChEBI" id="CHEBI:189552"/>
    </ligand>
</feature>
<feature type="site" description="Tyrosine radical intermediate" evidence="1">
    <location>
        <position position="161"/>
    </location>
</feature>
<feature type="site" description="Stabilizes free radical intermediate" evidence="1">
    <location>
        <position position="190"/>
    </location>
</feature>
<feature type="site" description="Cleavage; by CtpA" evidence="1">
    <location>
        <begin position="344"/>
        <end position="345"/>
    </location>
</feature>
<feature type="mutagenesis site" description="Az-V; herbicide resistance.">
    <original>F</original>
    <variation>S</variation>
    <location>
        <position position="211"/>
    </location>
</feature>
<feature type="mutagenesis site" description="Az-V; herbicide resistance.">
    <original>A</original>
    <variation>V</variation>
    <location>
        <position position="251"/>
    </location>
</feature>
<feature type="mutagenesis site" description="DCMU-IIA; herbicide resistance.">
    <original>F</original>
    <variation>L</variation>
    <location>
        <position position="255"/>
    </location>
</feature>
<feature type="mutagenesis site" description="DCMU-IIA/B; herbicide resistance.">
    <original>S</original>
    <variation>A</variation>
    <location>
        <position position="264"/>
    </location>
</feature>
<feature type="mutagenesis site" description="IoxIIA; herbicide resistance.">
    <original>N</original>
    <variation>D</variation>
    <location>
        <position position="266"/>
    </location>
</feature>
<feature type="mutagenesis site" description="IoxI; herbicide resistance.">
    <original>N</original>
    <variation>T</variation>
    <location>
        <position position="266"/>
    </location>
</feature>